<feature type="chain" id="PRO_0000061255" description="Cytochrome b">
    <location>
        <begin position="1"/>
        <end position="381"/>
    </location>
</feature>
<feature type="transmembrane region" description="Helical" evidence="2">
    <location>
        <begin position="33"/>
        <end position="53"/>
    </location>
</feature>
<feature type="transmembrane region" description="Helical" evidence="2">
    <location>
        <begin position="77"/>
        <end position="98"/>
    </location>
</feature>
<feature type="transmembrane region" description="Helical" evidence="2">
    <location>
        <begin position="113"/>
        <end position="133"/>
    </location>
</feature>
<feature type="transmembrane region" description="Helical" evidence="2">
    <location>
        <begin position="178"/>
        <end position="198"/>
    </location>
</feature>
<feature type="transmembrane region" description="Helical" evidence="2">
    <location>
        <begin position="226"/>
        <end position="246"/>
    </location>
</feature>
<feature type="transmembrane region" description="Helical" evidence="2">
    <location>
        <begin position="288"/>
        <end position="308"/>
    </location>
</feature>
<feature type="transmembrane region" description="Helical" evidence="2">
    <location>
        <begin position="320"/>
        <end position="340"/>
    </location>
</feature>
<feature type="transmembrane region" description="Helical" evidence="2">
    <location>
        <begin position="347"/>
        <end position="367"/>
    </location>
</feature>
<feature type="binding site" description="axial binding residue" evidence="2">
    <location>
        <position position="83"/>
    </location>
    <ligand>
        <name>heme b</name>
        <dbReference type="ChEBI" id="CHEBI:60344"/>
        <label>b562</label>
    </ligand>
    <ligandPart>
        <name>Fe</name>
        <dbReference type="ChEBI" id="CHEBI:18248"/>
    </ligandPart>
</feature>
<feature type="binding site" description="axial binding residue" evidence="2">
    <location>
        <position position="97"/>
    </location>
    <ligand>
        <name>heme b</name>
        <dbReference type="ChEBI" id="CHEBI:60344"/>
        <label>b566</label>
    </ligand>
    <ligandPart>
        <name>Fe</name>
        <dbReference type="ChEBI" id="CHEBI:18248"/>
    </ligandPart>
</feature>
<feature type="binding site" description="axial binding residue" evidence="2">
    <location>
        <position position="182"/>
    </location>
    <ligand>
        <name>heme b</name>
        <dbReference type="ChEBI" id="CHEBI:60344"/>
        <label>b562</label>
    </ligand>
    <ligandPart>
        <name>Fe</name>
        <dbReference type="ChEBI" id="CHEBI:18248"/>
    </ligandPart>
</feature>
<feature type="binding site" description="axial binding residue" evidence="2">
    <location>
        <position position="196"/>
    </location>
    <ligand>
        <name>heme b</name>
        <dbReference type="ChEBI" id="CHEBI:60344"/>
        <label>b566</label>
    </ligand>
    <ligandPart>
        <name>Fe</name>
        <dbReference type="ChEBI" id="CHEBI:18248"/>
    </ligandPart>
</feature>
<feature type="binding site" evidence="2">
    <location>
        <position position="201"/>
    </location>
    <ligand>
        <name>a ubiquinone</name>
        <dbReference type="ChEBI" id="CHEBI:16389"/>
    </ligand>
</feature>
<dbReference type="EMBL" id="AF010265">
    <property type="protein sequence ID" value="AAB69295.1"/>
    <property type="molecule type" value="Genomic_DNA"/>
</dbReference>
<dbReference type="SMR" id="O20603"/>
<dbReference type="GO" id="GO:0005743">
    <property type="term" value="C:mitochondrial inner membrane"/>
    <property type="evidence" value="ECO:0007669"/>
    <property type="project" value="UniProtKB-SubCell"/>
</dbReference>
<dbReference type="GO" id="GO:0045275">
    <property type="term" value="C:respiratory chain complex III"/>
    <property type="evidence" value="ECO:0007669"/>
    <property type="project" value="InterPro"/>
</dbReference>
<dbReference type="GO" id="GO:0046872">
    <property type="term" value="F:metal ion binding"/>
    <property type="evidence" value="ECO:0007669"/>
    <property type="project" value="UniProtKB-KW"/>
</dbReference>
<dbReference type="GO" id="GO:0008121">
    <property type="term" value="F:ubiquinol-cytochrome-c reductase activity"/>
    <property type="evidence" value="ECO:0007669"/>
    <property type="project" value="InterPro"/>
</dbReference>
<dbReference type="GO" id="GO:0006122">
    <property type="term" value="P:mitochondrial electron transport, ubiquinol to cytochrome c"/>
    <property type="evidence" value="ECO:0007669"/>
    <property type="project" value="TreeGrafter"/>
</dbReference>
<dbReference type="CDD" id="cd00290">
    <property type="entry name" value="cytochrome_b_C"/>
    <property type="match status" value="1"/>
</dbReference>
<dbReference type="CDD" id="cd00284">
    <property type="entry name" value="Cytochrome_b_N"/>
    <property type="match status" value="1"/>
</dbReference>
<dbReference type="FunFam" id="1.20.810.10:FF:000002">
    <property type="entry name" value="Cytochrome b"/>
    <property type="match status" value="1"/>
</dbReference>
<dbReference type="Gene3D" id="1.20.810.10">
    <property type="entry name" value="Cytochrome Bc1 Complex, Chain C"/>
    <property type="match status" value="1"/>
</dbReference>
<dbReference type="InterPro" id="IPR005798">
    <property type="entry name" value="Cyt_b/b6_C"/>
</dbReference>
<dbReference type="InterPro" id="IPR036150">
    <property type="entry name" value="Cyt_b/b6_C_sf"/>
</dbReference>
<dbReference type="InterPro" id="IPR005797">
    <property type="entry name" value="Cyt_b/b6_N"/>
</dbReference>
<dbReference type="InterPro" id="IPR027387">
    <property type="entry name" value="Cytb/b6-like_sf"/>
</dbReference>
<dbReference type="InterPro" id="IPR030689">
    <property type="entry name" value="Cytochrome_b"/>
</dbReference>
<dbReference type="InterPro" id="IPR048260">
    <property type="entry name" value="Cytochrome_b_C_euk/bac"/>
</dbReference>
<dbReference type="InterPro" id="IPR048259">
    <property type="entry name" value="Cytochrome_b_N_euk/bac"/>
</dbReference>
<dbReference type="InterPro" id="IPR016174">
    <property type="entry name" value="Di-haem_cyt_TM"/>
</dbReference>
<dbReference type="PANTHER" id="PTHR19271">
    <property type="entry name" value="CYTOCHROME B"/>
    <property type="match status" value="1"/>
</dbReference>
<dbReference type="PANTHER" id="PTHR19271:SF16">
    <property type="entry name" value="CYTOCHROME B"/>
    <property type="match status" value="1"/>
</dbReference>
<dbReference type="Pfam" id="PF00032">
    <property type="entry name" value="Cytochrom_B_C"/>
    <property type="match status" value="1"/>
</dbReference>
<dbReference type="Pfam" id="PF00033">
    <property type="entry name" value="Cytochrome_B"/>
    <property type="match status" value="1"/>
</dbReference>
<dbReference type="PIRSF" id="PIRSF038885">
    <property type="entry name" value="COB"/>
    <property type="match status" value="1"/>
</dbReference>
<dbReference type="SUPFAM" id="SSF81648">
    <property type="entry name" value="a domain/subunit of cytochrome bc1 complex (Ubiquinol-cytochrome c reductase)"/>
    <property type="match status" value="1"/>
</dbReference>
<dbReference type="SUPFAM" id="SSF81342">
    <property type="entry name" value="Transmembrane di-heme cytochromes"/>
    <property type="match status" value="1"/>
</dbReference>
<dbReference type="PROSITE" id="PS51003">
    <property type="entry name" value="CYTB_CTER"/>
    <property type="match status" value="1"/>
</dbReference>
<dbReference type="PROSITE" id="PS51002">
    <property type="entry name" value="CYTB_NTER"/>
    <property type="match status" value="1"/>
</dbReference>
<geneLocation type="mitochondrion"/>
<proteinExistence type="inferred from homology"/>
<organism>
    <name type="scientific">Myoictis wallacei</name>
    <name type="common">Wallace's three-striped dasyure</name>
    <dbReference type="NCBI Taxonomy" id="63144"/>
    <lineage>
        <taxon>Eukaryota</taxon>
        <taxon>Metazoa</taxon>
        <taxon>Chordata</taxon>
        <taxon>Craniata</taxon>
        <taxon>Vertebrata</taxon>
        <taxon>Euteleostomi</taxon>
        <taxon>Mammalia</taxon>
        <taxon>Metatheria</taxon>
        <taxon>Dasyuromorphia</taxon>
        <taxon>Dasyuridae</taxon>
        <taxon>Myoictis</taxon>
    </lineage>
</organism>
<keyword id="KW-0249">Electron transport</keyword>
<keyword id="KW-0349">Heme</keyword>
<keyword id="KW-0408">Iron</keyword>
<keyword id="KW-0472">Membrane</keyword>
<keyword id="KW-0479">Metal-binding</keyword>
<keyword id="KW-0496">Mitochondrion</keyword>
<keyword id="KW-0999">Mitochondrion inner membrane</keyword>
<keyword id="KW-0679">Respiratory chain</keyword>
<keyword id="KW-0812">Transmembrane</keyword>
<keyword id="KW-1133">Transmembrane helix</keyword>
<keyword id="KW-0813">Transport</keyword>
<keyword id="KW-0830">Ubiquinone</keyword>
<name>CYB_MYOWA</name>
<reference key="1">
    <citation type="journal article" date="1997" name="J. Mammal. Evol.">
        <title>Reconstructing the taxonomic radiation of dasyurine marsupials with cytochrome b, 12S rRNA, and protamine P1 gene trees.</title>
        <authorList>
            <person name="Krajewski C."/>
            <person name="Young J."/>
            <person name="Buckley L."/>
            <person name="Woolley P.A."/>
            <person name="Westerman M."/>
        </authorList>
    </citation>
    <scope>NUCLEOTIDE SEQUENCE [GENOMIC DNA]</scope>
</reference>
<accession>O20603</accession>
<comment type="function">
    <text evidence="2">Component of the ubiquinol-cytochrome c reductase complex (complex III or cytochrome b-c1 complex) that is part of the mitochondrial respiratory chain. The b-c1 complex mediates electron transfer from ubiquinol to cytochrome c. Contributes to the generation of a proton gradient across the mitochondrial membrane that is then used for ATP synthesis.</text>
</comment>
<comment type="cofactor">
    <cofactor evidence="2">
        <name>heme b</name>
        <dbReference type="ChEBI" id="CHEBI:60344"/>
    </cofactor>
    <text evidence="2">Binds 2 heme b groups non-covalently.</text>
</comment>
<comment type="subunit">
    <text evidence="2">The cytochrome bc1 complex contains 11 subunits: 3 respiratory subunits (MT-CYB, CYC1 and UQCRFS1), 2 core proteins (UQCRC1 and UQCRC2) and 6 low-molecular weight proteins (UQCRH/QCR6, UQCRB/QCR7, UQCRQ/QCR8, UQCR10/QCR9, UQCR11/QCR10 and a cleavage product of UQCRFS1). This cytochrome bc1 complex then forms a dimer.</text>
</comment>
<comment type="subcellular location">
    <subcellularLocation>
        <location evidence="2">Mitochondrion inner membrane</location>
        <topology evidence="2">Multi-pass membrane protein</topology>
    </subcellularLocation>
</comment>
<comment type="miscellaneous">
    <text evidence="1">Heme 1 (or BL or b562) is low-potential and absorbs at about 562 nm, and heme 2 (or BH or b566) is high-potential and absorbs at about 566 nm.</text>
</comment>
<comment type="similarity">
    <text evidence="3 4">Belongs to the cytochrome b family.</text>
</comment>
<comment type="caution">
    <text evidence="2">The full-length protein contains only eight transmembrane helices, not nine as predicted by bioinformatics tools.</text>
</comment>
<gene>
    <name type="primary">MT-CYB</name>
    <name type="synonym">COB</name>
    <name type="synonym">CYTB</name>
    <name type="synonym">MTCYB</name>
</gene>
<evidence type="ECO:0000250" key="1"/>
<evidence type="ECO:0000250" key="2">
    <source>
        <dbReference type="UniProtKB" id="P00157"/>
    </source>
</evidence>
<evidence type="ECO:0000255" key="3">
    <source>
        <dbReference type="PROSITE-ProRule" id="PRU00967"/>
    </source>
</evidence>
<evidence type="ECO:0000255" key="4">
    <source>
        <dbReference type="PROSITE-ProRule" id="PRU00968"/>
    </source>
</evidence>
<protein>
    <recommendedName>
        <fullName>Cytochrome b</fullName>
    </recommendedName>
    <alternativeName>
        <fullName>Complex III subunit 3</fullName>
    </alternativeName>
    <alternativeName>
        <fullName>Complex III subunit III</fullName>
    </alternativeName>
    <alternativeName>
        <fullName>Cytochrome b-c1 complex subunit 3</fullName>
    </alternativeName>
    <alternativeName>
        <fullName>Ubiquinol-cytochrome-c reductase complex cytochrome b subunit</fullName>
    </alternativeName>
</protein>
<sequence length="381" mass="42892">MISLRKTHPLLKIINHSFIDLPAPSNISAWWNFGSLLGMCLMIQILTGLFLAMHYTSDTLTAFSSVAHICRDVNYGWLLRNLHANGASMFFMCLFLHVGRGIYYGSYLYKETWNIGVILLLTVMATAFVGYVLPWGQMSFWGATVITNLLSTIPYIGTTLAEWIWGGFAVDKATLTRFFAFHFILPFIITALAMVHLLFLHETGSNNPSGINPDSDKIPFHPYYTIKDALGLMLLFLVLLLLALFSPDMLGDPDNFSPANPLNTPPHIKPEWYFLFAYAILRSIPNKLGGVLALLASIMILLILPLLHTANQRSMMFRPISQTLFWILTADLITLTWIGGQPVEQPFIIIGQLASVLYFLLILVLMPLAGMLENYMLKPKW</sequence>